<organism>
    <name type="scientific">Brucella suis (strain ATCC 23445 / NCTC 10510)</name>
    <dbReference type="NCBI Taxonomy" id="470137"/>
    <lineage>
        <taxon>Bacteria</taxon>
        <taxon>Pseudomonadati</taxon>
        <taxon>Pseudomonadota</taxon>
        <taxon>Alphaproteobacteria</taxon>
        <taxon>Hyphomicrobiales</taxon>
        <taxon>Brucellaceae</taxon>
        <taxon>Brucella/Ochrobactrum group</taxon>
        <taxon>Brucella</taxon>
    </lineage>
</organism>
<comment type="function">
    <text evidence="1">The RuvA-RuvB-RuvC complex processes Holliday junction (HJ) DNA during genetic recombination and DNA repair, while the RuvA-RuvB complex plays an important role in the rescue of blocked DNA replication forks via replication fork reversal (RFR). RuvA specifically binds to HJ cruciform DNA, conferring on it an open structure. The RuvB hexamer acts as an ATP-dependent pump, pulling dsDNA into and through the RuvAB complex. HJ branch migration allows RuvC to scan DNA until it finds its consensus sequence, where it cleaves and resolves the cruciform DNA.</text>
</comment>
<comment type="subunit">
    <text evidence="1">Homotetramer. Forms an RuvA(8)-RuvB(12)-Holliday junction (HJ) complex. HJ DNA is sandwiched between 2 RuvA tetramers; dsDNA enters through RuvA and exits via RuvB. An RuvB hexamer assembles on each DNA strand where it exits the tetramer. Each RuvB hexamer is contacted by two RuvA subunits (via domain III) on 2 adjacent RuvB subunits; this complex drives branch migration. In the full resolvosome a probable DNA-RuvA(4)-RuvB(12)-RuvC(2) complex forms which resolves the HJ.</text>
</comment>
<comment type="subcellular location">
    <subcellularLocation>
        <location evidence="1">Cytoplasm</location>
    </subcellularLocation>
</comment>
<comment type="domain">
    <text evidence="1">Has three domains with a flexible linker between the domains II and III and assumes an 'L' shape. Domain III is highly mobile and contacts RuvB.</text>
</comment>
<comment type="similarity">
    <text evidence="1">Belongs to the RuvA family.</text>
</comment>
<gene>
    <name evidence="1" type="primary">ruvA</name>
    <name type="ordered locus">BSUIS_B1179</name>
</gene>
<protein>
    <recommendedName>
        <fullName evidence="1">Holliday junction branch migration complex subunit RuvA</fullName>
    </recommendedName>
</protein>
<name>RUVA_BRUSI</name>
<feature type="chain" id="PRO_1000074412" description="Holliday junction branch migration complex subunit RuvA">
    <location>
        <begin position="1"/>
        <end position="205"/>
    </location>
</feature>
<feature type="region of interest" description="Domain I" evidence="1">
    <location>
        <begin position="1"/>
        <end position="64"/>
    </location>
</feature>
<feature type="region of interest" description="Domain II" evidence="1">
    <location>
        <begin position="65"/>
        <end position="143"/>
    </location>
</feature>
<feature type="region of interest" description="Flexible linker" evidence="1">
    <location>
        <begin position="144"/>
        <end position="152"/>
    </location>
</feature>
<feature type="region of interest" description="Domain III" evidence="1">
    <location>
        <begin position="153"/>
        <end position="205"/>
    </location>
</feature>
<reference key="1">
    <citation type="submission" date="2007-12" db="EMBL/GenBank/DDBJ databases">
        <title>Brucella suis ATCC 23445 whole genome shotgun sequencing project.</title>
        <authorList>
            <person name="Setubal J.C."/>
            <person name="Bowns C."/>
            <person name="Boyle S."/>
            <person name="Crasta O.R."/>
            <person name="Czar M.J."/>
            <person name="Dharmanolla C."/>
            <person name="Gillespie J.J."/>
            <person name="Kenyon R.W."/>
            <person name="Lu J."/>
            <person name="Mane S."/>
            <person name="Mohapatra S."/>
            <person name="Nagrani S."/>
            <person name="Purkayastha A."/>
            <person name="Rajasimha H.K."/>
            <person name="Shallom J.M."/>
            <person name="Shallom S."/>
            <person name="Shukla M."/>
            <person name="Snyder E.E."/>
            <person name="Sobral B.W."/>
            <person name="Wattam A.R."/>
            <person name="Will R."/>
            <person name="Williams K."/>
            <person name="Yoo H."/>
            <person name="Bruce D."/>
            <person name="Detter C."/>
            <person name="Munk C."/>
            <person name="Brettin T.S."/>
        </authorList>
    </citation>
    <scope>NUCLEOTIDE SEQUENCE [LARGE SCALE GENOMIC DNA]</scope>
    <source>
        <strain>ATCC 23445 / NCTC 10510</strain>
    </source>
</reference>
<proteinExistence type="inferred from homology"/>
<accession>A9WWI0</accession>
<sequence>MIGKLKGVIDEIAEDHAVIDVHGVGYVAFCSARTLGNLGGAGEAAILFIETYVREDMIRLYGFATQLEREWFRLLQNVQGVGAKVALAVLGTLSPSELANAIALRDIAMVSRAPGVGKKVAERIVTELKNKAPAFAGEASGTIGLKQELGAGAAPAPVADAVSALSNLGYSRDQAANAVAAALKETGEGADSAKLIRLGLKELSQ</sequence>
<dbReference type="EMBL" id="CP000912">
    <property type="protein sequence ID" value="ABY40116.1"/>
    <property type="molecule type" value="Genomic_DNA"/>
</dbReference>
<dbReference type="RefSeq" id="WP_002964792.1">
    <property type="nucleotide sequence ID" value="NC_010167.1"/>
</dbReference>
<dbReference type="SMR" id="A9WWI0"/>
<dbReference type="GeneID" id="97533143"/>
<dbReference type="KEGG" id="bmt:BSUIS_B1179"/>
<dbReference type="HOGENOM" id="CLU_087936_3_0_5"/>
<dbReference type="Proteomes" id="UP000008545">
    <property type="component" value="Chromosome II"/>
</dbReference>
<dbReference type="GO" id="GO:0005737">
    <property type="term" value="C:cytoplasm"/>
    <property type="evidence" value="ECO:0007669"/>
    <property type="project" value="UniProtKB-SubCell"/>
</dbReference>
<dbReference type="GO" id="GO:0009379">
    <property type="term" value="C:Holliday junction helicase complex"/>
    <property type="evidence" value="ECO:0007669"/>
    <property type="project" value="InterPro"/>
</dbReference>
<dbReference type="GO" id="GO:0048476">
    <property type="term" value="C:Holliday junction resolvase complex"/>
    <property type="evidence" value="ECO:0007669"/>
    <property type="project" value="UniProtKB-UniRule"/>
</dbReference>
<dbReference type="GO" id="GO:0005524">
    <property type="term" value="F:ATP binding"/>
    <property type="evidence" value="ECO:0007669"/>
    <property type="project" value="InterPro"/>
</dbReference>
<dbReference type="GO" id="GO:0000400">
    <property type="term" value="F:four-way junction DNA binding"/>
    <property type="evidence" value="ECO:0007669"/>
    <property type="project" value="UniProtKB-UniRule"/>
</dbReference>
<dbReference type="GO" id="GO:0009378">
    <property type="term" value="F:four-way junction helicase activity"/>
    <property type="evidence" value="ECO:0007669"/>
    <property type="project" value="InterPro"/>
</dbReference>
<dbReference type="GO" id="GO:0006310">
    <property type="term" value="P:DNA recombination"/>
    <property type="evidence" value="ECO:0007669"/>
    <property type="project" value="UniProtKB-UniRule"/>
</dbReference>
<dbReference type="GO" id="GO:0006281">
    <property type="term" value="P:DNA repair"/>
    <property type="evidence" value="ECO:0007669"/>
    <property type="project" value="UniProtKB-UniRule"/>
</dbReference>
<dbReference type="Gene3D" id="1.10.150.20">
    <property type="entry name" value="5' to 3' exonuclease, C-terminal subdomain"/>
    <property type="match status" value="1"/>
</dbReference>
<dbReference type="Gene3D" id="1.10.8.10">
    <property type="entry name" value="DNA helicase RuvA subunit, C-terminal domain"/>
    <property type="match status" value="1"/>
</dbReference>
<dbReference type="Gene3D" id="2.40.50.140">
    <property type="entry name" value="Nucleic acid-binding proteins"/>
    <property type="match status" value="1"/>
</dbReference>
<dbReference type="HAMAP" id="MF_00031">
    <property type="entry name" value="DNA_HJ_migration_RuvA"/>
    <property type="match status" value="1"/>
</dbReference>
<dbReference type="InterPro" id="IPR013849">
    <property type="entry name" value="DNA_helicase_Holl-junc_RuvA_I"/>
</dbReference>
<dbReference type="InterPro" id="IPR003583">
    <property type="entry name" value="Hlx-hairpin-Hlx_DNA-bd_motif"/>
</dbReference>
<dbReference type="InterPro" id="IPR012340">
    <property type="entry name" value="NA-bd_OB-fold"/>
</dbReference>
<dbReference type="InterPro" id="IPR000085">
    <property type="entry name" value="RuvA"/>
</dbReference>
<dbReference type="InterPro" id="IPR010994">
    <property type="entry name" value="RuvA_2-like"/>
</dbReference>
<dbReference type="InterPro" id="IPR011114">
    <property type="entry name" value="RuvA_C"/>
</dbReference>
<dbReference type="InterPro" id="IPR036267">
    <property type="entry name" value="RuvA_C_sf"/>
</dbReference>
<dbReference type="NCBIfam" id="TIGR00084">
    <property type="entry name" value="ruvA"/>
    <property type="match status" value="1"/>
</dbReference>
<dbReference type="Pfam" id="PF14520">
    <property type="entry name" value="HHH_5"/>
    <property type="match status" value="1"/>
</dbReference>
<dbReference type="Pfam" id="PF07499">
    <property type="entry name" value="RuvA_C"/>
    <property type="match status" value="1"/>
</dbReference>
<dbReference type="Pfam" id="PF01330">
    <property type="entry name" value="RuvA_N"/>
    <property type="match status" value="1"/>
</dbReference>
<dbReference type="SMART" id="SM00278">
    <property type="entry name" value="HhH1"/>
    <property type="match status" value="2"/>
</dbReference>
<dbReference type="SUPFAM" id="SSF46929">
    <property type="entry name" value="DNA helicase RuvA subunit, C-terminal domain"/>
    <property type="match status" value="1"/>
</dbReference>
<dbReference type="SUPFAM" id="SSF50249">
    <property type="entry name" value="Nucleic acid-binding proteins"/>
    <property type="match status" value="1"/>
</dbReference>
<dbReference type="SUPFAM" id="SSF47781">
    <property type="entry name" value="RuvA domain 2-like"/>
    <property type="match status" value="1"/>
</dbReference>
<keyword id="KW-0963">Cytoplasm</keyword>
<keyword id="KW-0227">DNA damage</keyword>
<keyword id="KW-0233">DNA recombination</keyword>
<keyword id="KW-0234">DNA repair</keyword>
<keyword id="KW-0238">DNA-binding</keyword>
<evidence type="ECO:0000255" key="1">
    <source>
        <dbReference type="HAMAP-Rule" id="MF_00031"/>
    </source>
</evidence>